<name>WAPC_DEMVE</name>
<feature type="signal peptide" evidence="2">
    <location>
        <begin position="1"/>
        <end position="24"/>
    </location>
</feature>
<feature type="chain" id="PRO_5000395634" description="Veswaprin-c">
    <location>
        <begin position="25"/>
        <end position="75"/>
    </location>
</feature>
<feature type="domain" description="WAP" evidence="3">
    <location>
        <begin position="27"/>
        <end position="72"/>
    </location>
</feature>
<feature type="disulfide bond" evidence="3">
    <location>
        <begin position="34"/>
        <end position="60"/>
    </location>
</feature>
<feature type="disulfide bond" evidence="3">
    <location>
        <begin position="43"/>
        <end position="64"/>
    </location>
</feature>
<feature type="disulfide bond" evidence="3">
    <location>
        <begin position="47"/>
        <end position="59"/>
    </location>
</feature>
<feature type="disulfide bond" evidence="3">
    <location>
        <begin position="53"/>
        <end position="68"/>
    </location>
</feature>
<comment type="function">
    <text evidence="1">Damages membranes of susceptible bacteria. Has no hemolytic activity. Not toxic to mice. Does not inhibit the proteinases elastase and cathepsin G.</text>
</comment>
<comment type="subcellular location">
    <subcellularLocation>
        <location evidence="6">Secreted</location>
    </subcellularLocation>
</comment>
<comment type="tissue specificity">
    <text evidence="6">Expressed by the venom gland.</text>
</comment>
<comment type="similarity">
    <text evidence="5">Belongs to the venom waprin family.</text>
</comment>
<dbReference type="EMBL" id="EU401834">
    <property type="protein sequence ID" value="ACC77783.1"/>
    <property type="molecule type" value="Genomic_DNA"/>
</dbReference>
<dbReference type="SMR" id="B5L5P6"/>
<dbReference type="GO" id="GO:0005576">
    <property type="term" value="C:extracellular region"/>
    <property type="evidence" value="ECO:0000250"/>
    <property type="project" value="UniProtKB"/>
</dbReference>
<dbReference type="GO" id="GO:0005615">
    <property type="term" value="C:extracellular space"/>
    <property type="evidence" value="ECO:0007669"/>
    <property type="project" value="TreeGrafter"/>
</dbReference>
<dbReference type="GO" id="GO:0004867">
    <property type="term" value="F:serine-type endopeptidase inhibitor activity"/>
    <property type="evidence" value="ECO:0007669"/>
    <property type="project" value="TreeGrafter"/>
</dbReference>
<dbReference type="GO" id="GO:0019731">
    <property type="term" value="P:antibacterial humoral response"/>
    <property type="evidence" value="ECO:0007669"/>
    <property type="project" value="TreeGrafter"/>
</dbReference>
<dbReference type="GO" id="GO:0045087">
    <property type="term" value="P:innate immune response"/>
    <property type="evidence" value="ECO:0007669"/>
    <property type="project" value="TreeGrafter"/>
</dbReference>
<dbReference type="GO" id="GO:0044278">
    <property type="term" value="P:venom-mediated disruption of cell wall in another organism"/>
    <property type="evidence" value="ECO:0000250"/>
    <property type="project" value="UniProtKB"/>
</dbReference>
<dbReference type="Gene3D" id="4.10.75.10">
    <property type="entry name" value="Elafin-like"/>
    <property type="match status" value="1"/>
</dbReference>
<dbReference type="InterPro" id="IPR036645">
    <property type="entry name" value="Elafin-like_sf"/>
</dbReference>
<dbReference type="InterPro" id="IPR008197">
    <property type="entry name" value="WAP_dom"/>
</dbReference>
<dbReference type="InterPro" id="IPR050514">
    <property type="entry name" value="WAP_four-disulfide_core"/>
</dbReference>
<dbReference type="PANTHER" id="PTHR19441:SF44">
    <property type="entry name" value="ANTILEUKOPROTEINASE"/>
    <property type="match status" value="1"/>
</dbReference>
<dbReference type="PANTHER" id="PTHR19441">
    <property type="entry name" value="WHEY ACDIC PROTEIN WAP"/>
    <property type="match status" value="1"/>
</dbReference>
<dbReference type="Pfam" id="PF00095">
    <property type="entry name" value="WAP"/>
    <property type="match status" value="1"/>
</dbReference>
<dbReference type="PRINTS" id="PR00003">
    <property type="entry name" value="4DISULPHCORE"/>
</dbReference>
<dbReference type="SMART" id="SM00217">
    <property type="entry name" value="WAP"/>
    <property type="match status" value="1"/>
</dbReference>
<dbReference type="SUPFAM" id="SSF57256">
    <property type="entry name" value="Elafin-like"/>
    <property type="match status" value="1"/>
</dbReference>
<dbReference type="PROSITE" id="PS51390">
    <property type="entry name" value="WAP"/>
    <property type="match status" value="1"/>
</dbReference>
<organism>
    <name type="scientific">Demansia vestigiata</name>
    <name type="common">Lesser black whip snake</name>
    <name type="synonym">Demansia atra</name>
    <dbReference type="NCBI Taxonomy" id="412038"/>
    <lineage>
        <taxon>Eukaryota</taxon>
        <taxon>Metazoa</taxon>
        <taxon>Chordata</taxon>
        <taxon>Craniata</taxon>
        <taxon>Vertebrata</taxon>
        <taxon>Euteleostomi</taxon>
        <taxon>Lepidosauria</taxon>
        <taxon>Squamata</taxon>
        <taxon>Bifurcata</taxon>
        <taxon>Unidentata</taxon>
        <taxon>Episquamata</taxon>
        <taxon>Toxicofera</taxon>
        <taxon>Serpentes</taxon>
        <taxon>Colubroidea</taxon>
        <taxon>Elapidae</taxon>
        <taxon>Notechinae</taxon>
        <taxon>Demansia</taxon>
    </lineage>
</organism>
<proteinExistence type="inferred from homology"/>
<sequence length="75" mass="8490">MSSGGLLLLLGLLTLWAELTPVSSLDRPKKPGLCPPRPQKPPCVRECKNDWRCPGERKCCRYGCIYECRDPIFVK</sequence>
<protein>
    <recommendedName>
        <fullName evidence="4">Veswaprin-c</fullName>
    </recommendedName>
</protein>
<reference key="1">
    <citation type="journal article" date="2008" name="Cell. Mol. Life Sci.">
        <title>Common evolution of waprin and Kunitz-like toxin families in Australian venomous snakes.</title>
        <authorList>
            <person name="St Pierre L."/>
            <person name="Earl S.T."/>
            <person name="Filippovich I."/>
            <person name="Sorokina N."/>
            <person name="Masci P.P."/>
            <person name="De Jersey J."/>
            <person name="Lavin M.F."/>
        </authorList>
    </citation>
    <scope>NUCLEOTIDE SEQUENCE [GENOMIC DNA]</scope>
    <source>
        <tissue>Venom gland</tissue>
    </source>
</reference>
<evidence type="ECO:0000250" key="1">
    <source>
        <dbReference type="UniProtKB" id="P83952"/>
    </source>
</evidence>
<evidence type="ECO:0000255" key="2"/>
<evidence type="ECO:0000255" key="3">
    <source>
        <dbReference type="PROSITE-ProRule" id="PRU00722"/>
    </source>
</evidence>
<evidence type="ECO:0000303" key="4">
    <source>
    </source>
</evidence>
<evidence type="ECO:0000305" key="5"/>
<evidence type="ECO:0000305" key="6">
    <source>
    </source>
</evidence>
<accession>B5L5P6</accession>
<keyword id="KW-0044">Antibiotic</keyword>
<keyword id="KW-0929">Antimicrobial</keyword>
<keyword id="KW-1015">Disulfide bond</keyword>
<keyword id="KW-0964">Secreted</keyword>
<keyword id="KW-0732">Signal</keyword>